<evidence type="ECO:0000255" key="1">
    <source>
        <dbReference type="HAMAP-Rule" id="MF_02124"/>
    </source>
</evidence>
<reference key="1">
    <citation type="journal article" date="2008" name="Biol. Direct">
        <title>Complete genome sequence of the extremely acidophilic methanotroph isolate V4, Methylacidiphilum infernorum, a representative of the bacterial phylum Verrucomicrobia.</title>
        <authorList>
            <person name="Hou S."/>
            <person name="Makarova K.S."/>
            <person name="Saw J.H."/>
            <person name="Senin P."/>
            <person name="Ly B.V."/>
            <person name="Zhou Z."/>
            <person name="Ren Y."/>
            <person name="Wang J."/>
            <person name="Galperin M.Y."/>
            <person name="Omelchenko M.V."/>
            <person name="Wolf Y.I."/>
            <person name="Yutin N."/>
            <person name="Koonin E.V."/>
            <person name="Stott M.B."/>
            <person name="Mountain B.W."/>
            <person name="Crowe M.A."/>
            <person name="Smirnova A.V."/>
            <person name="Dunfield P.F."/>
            <person name="Feng L."/>
            <person name="Wang L."/>
            <person name="Alam M."/>
        </authorList>
    </citation>
    <scope>NUCLEOTIDE SEQUENCE [LARGE SCALE GENOMIC DNA]</scope>
    <source>
        <strain>Isolate V4</strain>
    </source>
</reference>
<dbReference type="EC" id="2.4.99.16" evidence="1"/>
<dbReference type="EMBL" id="CP000975">
    <property type="protein sequence ID" value="ACD84046.1"/>
    <property type="molecule type" value="Genomic_DNA"/>
</dbReference>
<dbReference type="RefSeq" id="WP_012464328.1">
    <property type="nucleotide sequence ID" value="NC_010794.1"/>
</dbReference>
<dbReference type="SMR" id="B3DYJ8"/>
<dbReference type="STRING" id="481448.Minf_1992"/>
<dbReference type="CAZy" id="GH13">
    <property type="family name" value="Glycoside Hydrolase Family 13"/>
</dbReference>
<dbReference type="KEGG" id="min:Minf_1992"/>
<dbReference type="eggNOG" id="COG0366">
    <property type="taxonomic scope" value="Bacteria"/>
</dbReference>
<dbReference type="HOGENOM" id="CLU_015798_0_0_0"/>
<dbReference type="OrthoDB" id="9805159at2"/>
<dbReference type="Proteomes" id="UP000009149">
    <property type="component" value="Chromosome"/>
</dbReference>
<dbReference type="GO" id="GO:0016758">
    <property type="term" value="F:hexosyltransferase activity"/>
    <property type="evidence" value="ECO:0007669"/>
    <property type="project" value="UniProtKB-UniRule"/>
</dbReference>
<dbReference type="GO" id="GO:0004553">
    <property type="term" value="F:hydrolase activity, hydrolyzing O-glycosyl compounds"/>
    <property type="evidence" value="ECO:0007669"/>
    <property type="project" value="InterPro"/>
</dbReference>
<dbReference type="GO" id="GO:0030979">
    <property type="term" value="P:alpha-glucan biosynthetic process"/>
    <property type="evidence" value="ECO:0007669"/>
    <property type="project" value="UniProtKB-UniRule"/>
</dbReference>
<dbReference type="CDD" id="cd11344">
    <property type="entry name" value="AmyAc_GlgE_like"/>
    <property type="match status" value="1"/>
</dbReference>
<dbReference type="Gene3D" id="3.20.20.80">
    <property type="entry name" value="Glycosidases"/>
    <property type="match status" value="1"/>
</dbReference>
<dbReference type="Gene3D" id="2.60.40.1180">
    <property type="entry name" value="Golgi alpha-mannosidase II"/>
    <property type="match status" value="1"/>
</dbReference>
<dbReference type="Gene3D" id="2.60.40.10">
    <property type="entry name" value="Immunoglobulins"/>
    <property type="match status" value="1"/>
</dbReference>
<dbReference type="Gene3D" id="1.20.58.80">
    <property type="entry name" value="Phosphotransferase system, lactose/cellobiose-type IIA subunit"/>
    <property type="match status" value="1"/>
</dbReference>
<dbReference type="HAMAP" id="MF_02124">
    <property type="entry name" value="GlgE"/>
    <property type="match status" value="1"/>
</dbReference>
<dbReference type="InterPro" id="IPR026585">
    <property type="entry name" value="GlgE"/>
</dbReference>
<dbReference type="InterPro" id="IPR049171">
    <property type="entry name" value="GLGE_C"/>
</dbReference>
<dbReference type="InterPro" id="IPR021828">
    <property type="entry name" value="GlgE_dom_N/S"/>
</dbReference>
<dbReference type="InterPro" id="IPR013780">
    <property type="entry name" value="Glyco_hydro_b"/>
</dbReference>
<dbReference type="InterPro" id="IPR017853">
    <property type="entry name" value="Glycoside_hydrolase_SF"/>
</dbReference>
<dbReference type="InterPro" id="IPR013783">
    <property type="entry name" value="Ig-like_fold"/>
</dbReference>
<dbReference type="PANTHER" id="PTHR47786">
    <property type="entry name" value="ALPHA-1,4-GLUCAN:MALTOSE-1-PHOSPHATE MALTOSYLTRANSFERASE"/>
    <property type="match status" value="1"/>
</dbReference>
<dbReference type="PANTHER" id="PTHR47786:SF2">
    <property type="entry name" value="GLYCOSYL HYDROLASE FAMILY 13 CATALYTIC DOMAIN-CONTAINING PROTEIN"/>
    <property type="match status" value="1"/>
</dbReference>
<dbReference type="Pfam" id="PF21702">
    <property type="entry name" value="GLGE_C"/>
    <property type="match status" value="1"/>
</dbReference>
<dbReference type="Pfam" id="PF11896">
    <property type="entry name" value="GlgE_dom_N_S"/>
    <property type="match status" value="1"/>
</dbReference>
<dbReference type="SUPFAM" id="SSF51445">
    <property type="entry name" value="(Trans)glycosidases"/>
    <property type="match status" value="1"/>
</dbReference>
<protein>
    <recommendedName>
        <fullName evidence="1">Alpha-1,4-glucan:maltose-1-phosphate maltosyltransferase</fullName>
        <shortName evidence="1">GMPMT</shortName>
        <ecNumber evidence="1">2.4.99.16</ecNumber>
    </recommendedName>
    <alternativeName>
        <fullName evidence="1">(1-&gt;4)-alpha-D-glucan:maltose-1-phosphate alpha-D-maltosyltransferase</fullName>
    </alternativeName>
</protein>
<proteinExistence type="inferred from homology"/>
<organism>
    <name type="scientific">Methylacidiphilum infernorum (isolate V4)</name>
    <name type="common">Methylokorus infernorum (strain V4)</name>
    <dbReference type="NCBI Taxonomy" id="481448"/>
    <lineage>
        <taxon>Bacteria</taxon>
        <taxon>Pseudomonadati</taxon>
        <taxon>Verrucomicrobiota</taxon>
        <taxon>Methylacidiphilae</taxon>
        <taxon>Methylacidiphilales</taxon>
        <taxon>Methylacidiphilaceae</taxon>
        <taxon>Methylacidiphilum (ex Ratnadevi et al. 2023)</taxon>
    </lineage>
</organism>
<gene>
    <name evidence="1" type="primary">glgE</name>
    <name type="ordered locus">Minf_1992</name>
</gene>
<name>GLGE_METI4</name>
<keyword id="KW-0119">Carbohydrate metabolism</keyword>
<keyword id="KW-0328">Glycosyltransferase</keyword>
<keyword id="KW-0808">Transferase</keyword>
<sequence>MKMPSFGYEVEKSFLPVDGRKRIVIERIFPSVDCSDFPLKRVIGQTMVVRAYVFADGHERISVHLAYRHIADSQWTEISMEELGNDEWEASFPLEKLGIYEVKIIGWIDHFQNWLEKLHKLAENDKDIAVELSIGIGLLEKNWAFSRSQELKDWIDRLKDERLSLHQRLQLIKNPYLEELVQKNPDRSLSVESESPLFIFVERSKAQFSSWYEFFPRSWSSVPGKHGTFKECERLLPDIAAMGFDVVYLPPIHPIGKKARKGKNNALIASPEDVGSPWAIGSAEGGHKSIHPSLGSLEDFRHFVKKAADYGIEVALDIAFQCSPDHPYLLEHPAWFKWRPDGTVQYAENPPKKYEDIVPFDFETEDWQALWEELKSIFVFWINQGVKIFRVDNPHTKPLAFWRWVIWEIKRDYPDTLFLSEAFTRPKLLYGLAKRGFSQSYTYFTWRSEASEIKAYMEELTSPPVVEFFRPNFWPNTPDILAGYLQYAPPSVFKMRHVLAATLSSNYGIYGPAFELCVNIPLEPGKEEYKDSEKYEIKTWDWNAPGNIKEFIAKVNHIRKLHPALQRTENIRFIQGDNPRLLAYVKELPGHGDPLLIVVNMSRNTEMGWIHFQPESVGLDPSKPYQLTDLLADVTYTWHGEWNFVKLDPEACPAHLFQLSQDGSFSP</sequence>
<accession>B3DYJ8</accession>
<feature type="chain" id="PRO_0000413897" description="Alpha-1,4-glucan:maltose-1-phosphate maltosyltransferase">
    <location>
        <begin position="1"/>
        <end position="667"/>
    </location>
</feature>
<feature type="active site" description="Nucleophile" evidence="1">
    <location>
        <position position="392"/>
    </location>
</feature>
<feature type="active site" description="Proton donor" evidence="1">
    <location>
        <position position="421"/>
    </location>
</feature>
<feature type="binding site" evidence="1">
    <location>
        <position position="261"/>
    </location>
    <ligand>
        <name>alpha-maltose 1-phosphate</name>
        <dbReference type="ChEBI" id="CHEBI:63576"/>
    </ligand>
</feature>
<feature type="binding site" evidence="1">
    <location>
        <position position="321"/>
    </location>
    <ligand>
        <name>alpha-maltose 1-phosphate</name>
        <dbReference type="ChEBI" id="CHEBI:63576"/>
    </ligand>
</feature>
<feature type="binding site" evidence="1">
    <location>
        <position position="356"/>
    </location>
    <ligand>
        <name>alpha-maltose 1-phosphate</name>
        <dbReference type="ChEBI" id="CHEBI:63576"/>
    </ligand>
</feature>
<feature type="binding site" evidence="1">
    <location>
        <position position="393"/>
    </location>
    <ligand>
        <name>alpha-maltose 1-phosphate</name>
        <dbReference type="ChEBI" id="CHEBI:63576"/>
    </ligand>
</feature>
<feature type="binding site" evidence="1">
    <location>
        <begin position="534"/>
        <end position="535"/>
    </location>
    <ligand>
        <name>alpha-maltose 1-phosphate</name>
        <dbReference type="ChEBI" id="CHEBI:63576"/>
    </ligand>
</feature>
<feature type="site" description="Transition state stabilizer" evidence="1">
    <location>
        <position position="479"/>
    </location>
</feature>
<comment type="function">
    <text evidence="1">Maltosyltransferase that uses maltose 1-phosphate (M1P) as the sugar donor to elongate linear or branched alpha-(1-&gt;4)-glucans. Is involved in a branched alpha-glucan biosynthetic pathway from trehalose, together with TreS, Mak and GlgB.</text>
</comment>
<comment type="catalytic activity">
    <reaction evidence="1">
        <text>alpha-maltose 1-phosphate + [(1-&gt;4)-alpha-D-glucosyl](n) = [(1-&gt;4)-alpha-D-glucosyl](n+2) + phosphate</text>
        <dbReference type="Rhea" id="RHEA:42692"/>
        <dbReference type="Rhea" id="RHEA-COMP:9584"/>
        <dbReference type="Rhea" id="RHEA-COMP:10183"/>
        <dbReference type="ChEBI" id="CHEBI:15444"/>
        <dbReference type="ChEBI" id="CHEBI:43474"/>
        <dbReference type="ChEBI" id="CHEBI:63576"/>
        <dbReference type="EC" id="2.4.99.16"/>
    </reaction>
</comment>
<comment type="subunit">
    <text evidence="1">Homodimer.</text>
</comment>
<comment type="similarity">
    <text evidence="1">Belongs to the glycosyl hydrolase 13 family. GlgE subfamily.</text>
</comment>